<name>Y886_CHLCH</name>
<evidence type="ECO:0000255" key="1">
    <source>
        <dbReference type="HAMAP-Rule" id="MF_00674"/>
    </source>
</evidence>
<evidence type="ECO:0000256" key="2">
    <source>
        <dbReference type="SAM" id="MobiDB-lite"/>
    </source>
</evidence>
<feature type="chain" id="PRO_1000044741" description="UPF0251 protein Cag_0886">
    <location>
        <begin position="1"/>
        <end position="177"/>
    </location>
</feature>
<feature type="region of interest" description="Disordered" evidence="2">
    <location>
        <begin position="147"/>
        <end position="177"/>
    </location>
</feature>
<organism>
    <name type="scientific">Chlorobium chlorochromatii (strain CaD3)</name>
    <dbReference type="NCBI Taxonomy" id="340177"/>
    <lineage>
        <taxon>Bacteria</taxon>
        <taxon>Pseudomonadati</taxon>
        <taxon>Chlorobiota</taxon>
        <taxon>Chlorobiia</taxon>
        <taxon>Chlorobiales</taxon>
        <taxon>Chlorobiaceae</taxon>
        <taxon>Chlorobium/Pelodictyon group</taxon>
        <taxon>Chlorobium</taxon>
    </lineage>
</organism>
<gene>
    <name type="ordered locus">Cag_0886</name>
</gene>
<comment type="similarity">
    <text evidence="1">Belongs to the UPF0251 family.</text>
</comment>
<proteinExistence type="inferred from homology"/>
<protein>
    <recommendedName>
        <fullName evidence="1">UPF0251 protein Cag_0886</fullName>
    </recommendedName>
</protein>
<accession>Q3AS74</accession>
<dbReference type="EMBL" id="CP000108">
    <property type="protein sequence ID" value="ABB28151.1"/>
    <property type="molecule type" value="Genomic_DNA"/>
</dbReference>
<dbReference type="STRING" id="340177.Cag_0886"/>
<dbReference type="KEGG" id="cch:Cag_0886"/>
<dbReference type="eggNOG" id="COG1342">
    <property type="taxonomic scope" value="Bacteria"/>
</dbReference>
<dbReference type="HOGENOM" id="CLU_094511_0_1_10"/>
<dbReference type="OrthoDB" id="280278at2"/>
<dbReference type="HAMAP" id="MF_00674">
    <property type="entry name" value="UPF0251"/>
    <property type="match status" value="1"/>
</dbReference>
<dbReference type="InterPro" id="IPR002852">
    <property type="entry name" value="UPF0251"/>
</dbReference>
<dbReference type="PANTHER" id="PTHR37478">
    <property type="match status" value="1"/>
</dbReference>
<dbReference type="PANTHER" id="PTHR37478:SF2">
    <property type="entry name" value="UPF0251 PROTEIN TK0562"/>
    <property type="match status" value="1"/>
</dbReference>
<dbReference type="Pfam" id="PF02001">
    <property type="entry name" value="DUF134"/>
    <property type="match status" value="1"/>
</dbReference>
<reference key="1">
    <citation type="submission" date="2005-08" db="EMBL/GenBank/DDBJ databases">
        <title>Complete sequence of Chlorobium chlorochromatii CaD3.</title>
        <authorList>
            <consortium name="US DOE Joint Genome Institute"/>
            <person name="Copeland A."/>
            <person name="Lucas S."/>
            <person name="Lapidus A."/>
            <person name="Barry K."/>
            <person name="Detter J.C."/>
            <person name="Glavina T."/>
            <person name="Hammon N."/>
            <person name="Israni S."/>
            <person name="Pitluck S."/>
            <person name="Bryant D."/>
            <person name="Schmutz J."/>
            <person name="Larimer F."/>
            <person name="Land M."/>
            <person name="Kyrpides N."/>
            <person name="Ivanova N."/>
            <person name="Richardson P."/>
        </authorList>
    </citation>
    <scope>NUCLEOTIDE SEQUENCE [LARGE SCALE GENOMIC DNA]</scope>
    <source>
        <strain>CaD3</strain>
    </source>
</reference>
<sequence>MRKKRAGRPQHCRCVQDLPKVTCFTPSGVAPEAVEQVLMTVDELEAMRLADRDGLYHADAAMQMKVSRPTFGRILESGRRKVADALVGGKQICIKGGTVLAVCDSIPTERPDICLCPTCGREFPHIKGVPCRNSICPDCNEPLQRKGGCLSDEESDEQENEQRTVGYPESEEELEIE</sequence>